<keyword id="KW-0687">Ribonucleoprotein</keyword>
<keyword id="KW-0689">Ribosomal protein</keyword>
<keyword id="KW-0694">RNA-binding</keyword>
<keyword id="KW-0699">rRNA-binding</keyword>
<reference key="1">
    <citation type="journal article" date="2005" name="Proc. Natl. Acad. Sci. U.S.A.">
        <title>Complete genome sequencing of Anaplasma marginale reveals that the surface is skewed to two superfamilies of outer membrane proteins.</title>
        <authorList>
            <person name="Brayton K.A."/>
            <person name="Kappmeyer L.S."/>
            <person name="Herndon D.R."/>
            <person name="Dark M.J."/>
            <person name="Tibbals D.L."/>
            <person name="Palmer G.H."/>
            <person name="McGuire T.C."/>
            <person name="Knowles D.P. Jr."/>
        </authorList>
    </citation>
    <scope>NUCLEOTIDE SEQUENCE [LARGE SCALE GENOMIC DNA]</scope>
    <source>
        <strain>St. Maries</strain>
    </source>
</reference>
<evidence type="ECO:0000255" key="1">
    <source>
        <dbReference type="HAMAP-Rule" id="MF_01367"/>
    </source>
</evidence>
<evidence type="ECO:0000305" key="2"/>
<dbReference type="EMBL" id="CP000030">
    <property type="protein sequence ID" value="AAV86812.1"/>
    <property type="molecule type" value="Genomic_DNA"/>
</dbReference>
<dbReference type="RefSeq" id="WP_010265276.1">
    <property type="nucleotide sequence ID" value="NZ_AFMU01000034.1"/>
</dbReference>
<dbReference type="SMR" id="Q5PA68"/>
<dbReference type="GeneID" id="7397868"/>
<dbReference type="KEGG" id="ama:AM901"/>
<dbReference type="PATRIC" id="fig|320483.3.peg.779"/>
<dbReference type="HOGENOM" id="CLU_095071_2_2_5"/>
<dbReference type="GO" id="GO:0022625">
    <property type="term" value="C:cytosolic large ribosomal subunit"/>
    <property type="evidence" value="ECO:0007669"/>
    <property type="project" value="TreeGrafter"/>
</dbReference>
<dbReference type="GO" id="GO:0070180">
    <property type="term" value="F:large ribosomal subunit rRNA binding"/>
    <property type="evidence" value="ECO:0007669"/>
    <property type="project" value="TreeGrafter"/>
</dbReference>
<dbReference type="GO" id="GO:0003735">
    <property type="term" value="F:structural constituent of ribosome"/>
    <property type="evidence" value="ECO:0007669"/>
    <property type="project" value="InterPro"/>
</dbReference>
<dbReference type="GO" id="GO:0006412">
    <property type="term" value="P:translation"/>
    <property type="evidence" value="ECO:0007669"/>
    <property type="project" value="UniProtKB-UniRule"/>
</dbReference>
<dbReference type="CDD" id="cd00337">
    <property type="entry name" value="Ribosomal_uL14"/>
    <property type="match status" value="1"/>
</dbReference>
<dbReference type="Gene3D" id="2.40.150.20">
    <property type="entry name" value="Ribosomal protein L14"/>
    <property type="match status" value="1"/>
</dbReference>
<dbReference type="HAMAP" id="MF_01367">
    <property type="entry name" value="Ribosomal_uL14"/>
    <property type="match status" value="1"/>
</dbReference>
<dbReference type="InterPro" id="IPR000218">
    <property type="entry name" value="Ribosomal_uL14"/>
</dbReference>
<dbReference type="InterPro" id="IPR005745">
    <property type="entry name" value="Ribosomal_uL14_bac-type"/>
</dbReference>
<dbReference type="InterPro" id="IPR019972">
    <property type="entry name" value="Ribosomal_uL14_CS"/>
</dbReference>
<dbReference type="InterPro" id="IPR036853">
    <property type="entry name" value="Ribosomal_uL14_sf"/>
</dbReference>
<dbReference type="NCBIfam" id="TIGR01067">
    <property type="entry name" value="rplN_bact"/>
    <property type="match status" value="1"/>
</dbReference>
<dbReference type="PANTHER" id="PTHR11761">
    <property type="entry name" value="50S/60S RIBOSOMAL PROTEIN L14/L23"/>
    <property type="match status" value="1"/>
</dbReference>
<dbReference type="PANTHER" id="PTHR11761:SF3">
    <property type="entry name" value="LARGE RIBOSOMAL SUBUNIT PROTEIN UL14M"/>
    <property type="match status" value="1"/>
</dbReference>
<dbReference type="Pfam" id="PF00238">
    <property type="entry name" value="Ribosomal_L14"/>
    <property type="match status" value="1"/>
</dbReference>
<dbReference type="SMART" id="SM01374">
    <property type="entry name" value="Ribosomal_L14"/>
    <property type="match status" value="1"/>
</dbReference>
<dbReference type="SUPFAM" id="SSF50193">
    <property type="entry name" value="Ribosomal protein L14"/>
    <property type="match status" value="1"/>
</dbReference>
<dbReference type="PROSITE" id="PS00049">
    <property type="entry name" value="RIBOSOMAL_L14"/>
    <property type="match status" value="1"/>
</dbReference>
<comment type="function">
    <text evidence="1">Binds to 23S rRNA. Forms part of two intersubunit bridges in the 70S ribosome.</text>
</comment>
<comment type="subunit">
    <text evidence="1">Part of the 50S ribosomal subunit. Forms a cluster with proteins L3 and L19. In the 70S ribosome, L14 and L19 interact and together make contacts with the 16S rRNA in bridges B5 and B8.</text>
</comment>
<comment type="similarity">
    <text evidence="1">Belongs to the universal ribosomal protein uL14 family.</text>
</comment>
<gene>
    <name evidence="1" type="primary">rplN</name>
    <name type="ordered locus">AM901</name>
</gene>
<organism>
    <name type="scientific">Anaplasma marginale (strain St. Maries)</name>
    <dbReference type="NCBI Taxonomy" id="234826"/>
    <lineage>
        <taxon>Bacteria</taxon>
        <taxon>Pseudomonadati</taxon>
        <taxon>Pseudomonadota</taxon>
        <taxon>Alphaproteobacteria</taxon>
        <taxon>Rickettsiales</taxon>
        <taxon>Anaplasmataceae</taxon>
        <taxon>Anaplasma</taxon>
    </lineage>
</organism>
<protein>
    <recommendedName>
        <fullName evidence="1">Large ribosomal subunit protein uL14</fullName>
    </recommendedName>
    <alternativeName>
        <fullName evidence="2">50S ribosomal protein L14</fullName>
    </alternativeName>
</protein>
<accession>Q5PA68</accession>
<proteinExistence type="inferred from homology"/>
<name>RL14_ANAMM</name>
<sequence>MIQKNAILDVADNSGARKVLCIGFLGGKKRALVGDVIVVSARVVAPRGKVNKGRVYKAVVVRTKGPIRRLDGSTIRFSSNAVVLVNDQGDPLGTRVFGPVRKLPVGEFTKVMSLAVEVL</sequence>
<feature type="chain" id="PRO_0000355803" description="Large ribosomal subunit protein uL14">
    <location>
        <begin position="1"/>
        <end position="119"/>
    </location>
</feature>